<sequence length="1235" mass="136520">MFSGGGGPLSPGGKSAARAASGFFAPAGPRGAGRGPPPCLRQNFYNPYLAPVGTQQKPTGPTQRHTYYSECDEFRFIAPRVLDEDAPPEKRAGVHDGHLKRAPKVYCGGDERDVLRVGSGGFWPRRSRLWGGVDHAPAGFNPTVTVFHVYDILENVEHAYGMRAAQFHARFMDAITPTGTVITLLGLTPEGHRVAVHVYGTRQYFYMNKEEVDRHLQCRAPRDLCERMAAALRESPGASFRGISADHFEAEVVERTDVYYYETRPALFYRVYVRSGRVLSYLCDNFCPAIKKYEGGVDATTRFILDNPGFVTFGWYRLKPGRNNTLAQPRAPMAFGTSSDVEFNCTADNLAIEGGMSDLPAYKLMCFDIECKAGGEDELAFPVAGHPEDLVIQISCLLYDLSTTALEHVLLFSLGSCDLPESHLNELAARGLPTPVVLEFDSEFEMLLAFMTLVKQYGPEFVTGYNIINFDWPFLLAKLTDIYKVPLDGYGRMNGRGVFRVWDIGQSHFQKRSKIKVNGMVNIDMYGIITDKIKLSSYKLNAVAEAVLKDKKKDLSYRDIPAYYATGPAQRGVIGEYCIQDSLLVGQLFFKFLPHLELSAVARLAGINITRTIYDGQQIRVFTCLLRLADQKGFILPDTQGRFRGAGGEAPKRPAAAREDEERPEEEGEDEDEREEGGGEREPEGARETAGRHVGYQGAKVLDPTSGFHVNPVVVFDFASLYPSIIQAHNLCFSTLSLRADAVAHLEAGKDYLEIEVGGRRLFFVKAHVRESLLSILLRDWLAMRKQIRSRIPQSSPEEAVLLDKQQAAIKVVCNSVYGFTGVQHGLLPCLHVAATVTTIGREMLLATREYVHARWAAFEQLLADFPEAADMRAPGPYSMRIIYGDTDSIFVLCRGLTAAGLTAMGDKMASHISRALFLPPIKLECEKTFTKLLLIAKKKYIGVIYGGKMLIKGVDLVRKNNCAFINRTSRALVDLLFYDDTVSGAAAALAERPAEEWLARPLPEGLQAFGAVLVDAHRRITDPERDIQDFVLTAELSRHPRAYTNKRLAHLTVYYKLMARRAQVPSIKDRIPYVIVAQTREVEETVARLAALRELDAAAPGDEPAPPAALPSPAKRPRETPSHADPPGGASKPRKLLVSELAEDPAYAIAHGVALNTDYYFSHLLGAACVTFKALFGNNAKITESLLKRFIPEVWHPPDDVAARLRAAGFGAVGAGATAEETRRMLHRAFDTLA</sequence>
<keyword id="KW-0002">3D-structure</keyword>
<keyword id="KW-0235">DNA replication</keyword>
<keyword id="KW-0238">DNA-binding</keyword>
<keyword id="KW-0239">DNA-directed DNA polymerase</keyword>
<keyword id="KW-0255">Endonuclease</keyword>
<keyword id="KW-1048">Host nucleus</keyword>
<keyword id="KW-0378">Hydrolase</keyword>
<keyword id="KW-0511">Multifunctional enzyme</keyword>
<keyword id="KW-0540">Nuclease</keyword>
<keyword id="KW-0548">Nucleotidyltransferase</keyword>
<keyword id="KW-0808">Transferase</keyword>
<keyword id="KW-1194">Viral DNA replication</keyword>
<feature type="chain" id="PRO_0000046513" description="DNA polymerase catalytic subunit">
    <location>
        <begin position="1"/>
        <end position="1235"/>
    </location>
</feature>
<feature type="region of interest" description="Disordered" evidence="2">
    <location>
        <begin position="640"/>
        <end position="693"/>
    </location>
</feature>
<feature type="region of interest" description="Disordered" evidence="2">
    <location>
        <begin position="1098"/>
        <end position="1134"/>
    </location>
</feature>
<feature type="compositionally biased region" description="Basic and acidic residues" evidence="2">
    <location>
        <begin position="650"/>
        <end position="661"/>
    </location>
</feature>
<feature type="compositionally biased region" description="Acidic residues" evidence="2">
    <location>
        <begin position="662"/>
        <end position="675"/>
    </location>
</feature>
<feature type="compositionally biased region" description="Basic and acidic residues" evidence="2">
    <location>
        <begin position="676"/>
        <end position="691"/>
    </location>
</feature>
<feature type="strand" evidence="4">
    <location>
        <begin position="72"/>
        <end position="79"/>
    </location>
</feature>
<feature type="helix" evidence="4">
    <location>
        <begin position="80"/>
        <end position="82"/>
    </location>
</feature>
<feature type="strand" evidence="4">
    <location>
        <begin position="92"/>
        <end position="101"/>
    </location>
</feature>
<feature type="strand" evidence="4">
    <location>
        <begin position="104"/>
        <end position="107"/>
    </location>
</feature>
<feature type="strand" evidence="4">
    <location>
        <begin position="110"/>
        <end position="113"/>
    </location>
</feature>
<feature type="strand" evidence="4">
    <location>
        <begin position="128"/>
        <end position="130"/>
    </location>
</feature>
<feature type="strand" evidence="4">
    <location>
        <begin position="145"/>
        <end position="157"/>
    </location>
</feature>
<feature type="helix" evidence="4">
    <location>
        <begin position="160"/>
        <end position="162"/>
    </location>
</feature>
<feature type="helix" evidence="4">
    <location>
        <begin position="169"/>
        <end position="174"/>
    </location>
</feature>
<feature type="strand" evidence="4">
    <location>
        <begin position="179"/>
        <end position="187"/>
    </location>
</feature>
<feature type="strand" evidence="4">
    <location>
        <begin position="193"/>
        <end position="199"/>
    </location>
</feature>
<feature type="strand" evidence="4">
    <location>
        <begin position="203"/>
        <end position="208"/>
    </location>
</feature>
<feature type="helix" evidence="4">
    <location>
        <begin position="209"/>
        <end position="214"/>
    </location>
</feature>
<feature type="helix" evidence="4">
    <location>
        <begin position="221"/>
        <end position="234"/>
    </location>
</feature>
<feature type="strand" evidence="4">
    <location>
        <begin position="235"/>
        <end position="237"/>
    </location>
</feature>
<feature type="helix" evidence="4">
    <location>
        <begin position="245"/>
        <end position="247"/>
    </location>
</feature>
<feature type="strand" evidence="4">
    <location>
        <begin position="249"/>
        <end position="259"/>
    </location>
</feature>
<feature type="strand" evidence="4">
    <location>
        <begin position="266"/>
        <end position="274"/>
    </location>
</feature>
<feature type="helix" evidence="4">
    <location>
        <begin position="276"/>
        <end position="285"/>
    </location>
</feature>
<feature type="strand" evidence="4">
    <location>
        <begin position="288"/>
        <end position="290"/>
    </location>
</feature>
<feature type="strand" evidence="4">
    <location>
        <begin position="292"/>
        <end position="294"/>
    </location>
</feature>
<feature type="helix" evidence="4">
    <location>
        <begin position="299"/>
        <end position="306"/>
    </location>
</feature>
<feature type="strand" evidence="4">
    <location>
        <begin position="312"/>
        <end position="318"/>
    </location>
</feature>
<feature type="turn" evidence="4">
    <location>
        <begin position="322"/>
        <end position="324"/>
    </location>
</feature>
<feature type="helix" evidence="4">
    <location>
        <begin position="332"/>
        <end position="334"/>
    </location>
</feature>
<feature type="strand" evidence="4">
    <location>
        <begin position="336"/>
        <end position="338"/>
    </location>
</feature>
<feature type="strand" evidence="4">
    <location>
        <begin position="340"/>
        <end position="346"/>
    </location>
</feature>
<feature type="helix" evidence="4">
    <location>
        <begin position="347"/>
        <end position="349"/>
    </location>
</feature>
<feature type="strand" evidence="4">
    <location>
        <begin position="350"/>
        <end position="352"/>
    </location>
</feature>
<feature type="strand" evidence="4">
    <location>
        <begin position="363"/>
        <end position="372"/>
    </location>
</feature>
<feature type="strand" evidence="4">
    <location>
        <begin position="389"/>
        <end position="400"/>
    </location>
</feature>
<feature type="turn" evidence="4">
    <location>
        <begin position="401"/>
        <end position="403"/>
    </location>
</feature>
<feature type="strand" evidence="4">
    <location>
        <begin position="406"/>
        <end position="415"/>
    </location>
</feature>
<feature type="helix" evidence="4">
    <location>
        <begin position="421"/>
        <end position="429"/>
    </location>
</feature>
<feature type="strand" evidence="4">
    <location>
        <begin position="436"/>
        <end position="442"/>
    </location>
</feature>
<feature type="helix" evidence="4">
    <location>
        <begin position="443"/>
        <end position="457"/>
    </location>
</feature>
<feature type="strand" evidence="4">
    <location>
        <begin position="460"/>
        <end position="466"/>
    </location>
</feature>
<feature type="turn" evidence="4">
    <location>
        <begin position="467"/>
        <end position="470"/>
    </location>
</feature>
<feature type="helix" evidence="4">
    <location>
        <begin position="471"/>
        <end position="481"/>
    </location>
</feature>
<feature type="turn" evidence="4">
    <location>
        <begin position="488"/>
        <end position="490"/>
    </location>
</feature>
<feature type="strand" evidence="4">
    <location>
        <begin position="491"/>
        <end position="496"/>
    </location>
</feature>
<feature type="strand" evidence="4">
    <location>
        <begin position="499"/>
        <end position="501"/>
    </location>
</feature>
<feature type="strand" evidence="4">
    <location>
        <begin position="515"/>
        <end position="517"/>
    </location>
</feature>
<feature type="strand" evidence="4">
    <location>
        <begin position="520"/>
        <end position="524"/>
    </location>
</feature>
<feature type="helix" evidence="4">
    <location>
        <begin position="525"/>
        <end position="529"/>
    </location>
</feature>
<feature type="helix" evidence="4">
    <location>
        <begin position="540"/>
        <end position="546"/>
    </location>
</feature>
<feature type="turn" evidence="4">
    <location>
        <begin position="557"/>
        <end position="559"/>
    </location>
</feature>
<feature type="helix" evidence="4">
    <location>
        <begin position="560"/>
        <end position="566"/>
    </location>
</feature>
<feature type="helix" evidence="4">
    <location>
        <begin position="568"/>
        <end position="592"/>
    </location>
</feature>
<feature type="helix" evidence="4">
    <location>
        <begin position="594"/>
        <end position="605"/>
    </location>
</feature>
<feature type="helix" evidence="4">
    <location>
        <begin position="609"/>
        <end position="611"/>
    </location>
</feature>
<feature type="helix" evidence="4">
    <location>
        <begin position="619"/>
        <end position="632"/>
    </location>
</feature>
<feature type="strand" evidence="4">
    <location>
        <begin position="707"/>
        <end position="709"/>
    </location>
</feature>
<feature type="strand" evidence="4">
    <location>
        <begin position="713"/>
        <end position="719"/>
    </location>
</feature>
<feature type="helix" evidence="4">
    <location>
        <begin position="721"/>
        <end position="728"/>
    </location>
</feature>
<feature type="turn" evidence="4">
    <location>
        <begin position="733"/>
        <end position="735"/>
    </location>
</feature>
<feature type="strand" evidence="4">
    <location>
        <begin position="736"/>
        <end position="738"/>
    </location>
</feature>
<feature type="turn" evidence="4">
    <location>
        <begin position="748"/>
        <end position="751"/>
    </location>
</feature>
<feature type="strand" evidence="4">
    <location>
        <begin position="752"/>
        <end position="756"/>
    </location>
</feature>
<feature type="strand" evidence="4">
    <location>
        <begin position="758"/>
        <end position="765"/>
    </location>
</feature>
<feature type="turn" evidence="4">
    <location>
        <begin position="767"/>
        <end position="769"/>
    </location>
</feature>
<feature type="helix" evidence="4">
    <location>
        <begin position="773"/>
        <end position="791"/>
    </location>
</feature>
<feature type="helix" evidence="4">
    <location>
        <begin position="792"/>
        <end position="794"/>
    </location>
</feature>
<feature type="helix" evidence="4">
    <location>
        <begin position="797"/>
        <end position="814"/>
    </location>
</feature>
<feature type="helix" evidence="4">
    <location>
        <begin position="817"/>
        <end position="822"/>
    </location>
</feature>
<feature type="strand" evidence="4">
    <location>
        <begin position="826"/>
        <end position="828"/>
    </location>
</feature>
<feature type="helix" evidence="4">
    <location>
        <begin position="831"/>
        <end position="856"/>
    </location>
</feature>
<feature type="helix" evidence="4">
    <location>
        <begin position="859"/>
        <end position="865"/>
    </location>
</feature>
<feature type="helix" evidence="4">
    <location>
        <begin position="867"/>
        <end position="872"/>
    </location>
</feature>
<feature type="strand" evidence="4">
    <location>
        <begin position="879"/>
        <end position="885"/>
    </location>
</feature>
<feature type="strand" evidence="4">
    <location>
        <begin position="887"/>
        <end position="895"/>
    </location>
</feature>
<feature type="helix" evidence="4">
    <location>
        <begin position="902"/>
        <end position="917"/>
    </location>
</feature>
<feature type="strand" evidence="4">
    <location>
        <begin position="923"/>
        <end position="937"/>
    </location>
</feature>
<feature type="strand" evidence="4">
    <location>
        <begin position="940"/>
        <end position="945"/>
    </location>
</feature>
<feature type="strand" evidence="4">
    <location>
        <begin position="950"/>
        <end position="954"/>
    </location>
</feature>
<feature type="helix" evidence="4">
    <location>
        <begin position="964"/>
        <end position="979"/>
    </location>
</feature>
<feature type="helix" evidence="4">
    <location>
        <begin position="981"/>
        <end position="989"/>
    </location>
</feature>
<feature type="helix" evidence="4">
    <location>
        <begin position="990"/>
        <end position="992"/>
    </location>
</feature>
<feature type="helix" evidence="4">
    <location>
        <begin position="995"/>
        <end position="1000"/>
    </location>
</feature>
<feature type="helix" evidence="4">
    <location>
        <begin position="1005"/>
        <end position="1007"/>
    </location>
</feature>
<feature type="helix" evidence="4">
    <location>
        <begin position="1008"/>
        <end position="1022"/>
    </location>
</feature>
<feature type="helix" evidence="4">
    <location>
        <begin position="1029"/>
        <end position="1031"/>
    </location>
</feature>
<feature type="helix" evidence="4">
    <location>
        <begin position="1041"/>
        <end position="1043"/>
    </location>
</feature>
<feature type="helix" evidence="4">
    <location>
        <begin position="1050"/>
        <end position="1060"/>
    </location>
</feature>
<feature type="turn" evidence="4">
    <location>
        <begin position="1069"/>
        <end position="1071"/>
    </location>
</feature>
<feature type="strand" evidence="4">
    <location>
        <begin position="1074"/>
        <end position="1077"/>
    </location>
</feature>
<feature type="helix" evidence="4">
    <location>
        <begin position="1081"/>
        <end position="1085"/>
    </location>
</feature>
<feature type="helix" evidence="4">
    <location>
        <begin position="1087"/>
        <end position="1095"/>
    </location>
</feature>
<feature type="helix" evidence="4">
    <location>
        <begin position="1146"/>
        <end position="1151"/>
    </location>
</feature>
<feature type="helix" evidence="4">
    <location>
        <begin position="1158"/>
        <end position="1172"/>
    </location>
</feature>
<feature type="helix" evidence="4">
    <location>
        <begin position="1174"/>
        <end position="1177"/>
    </location>
</feature>
<feature type="helix" evidence="4">
    <location>
        <begin position="1181"/>
        <end position="1189"/>
    </location>
</feature>
<feature type="helix" evidence="4">
    <location>
        <begin position="1194"/>
        <end position="1196"/>
    </location>
</feature>
<organism>
    <name type="scientific">Human herpesvirus 1 (strain KOS)</name>
    <name type="common">HHV-1</name>
    <name type="synonym">Human herpes simplex virus 1</name>
    <dbReference type="NCBI Taxonomy" id="10306"/>
    <lineage>
        <taxon>Viruses</taxon>
        <taxon>Duplodnaviria</taxon>
        <taxon>Heunggongvirae</taxon>
        <taxon>Peploviricota</taxon>
        <taxon>Herviviricetes</taxon>
        <taxon>Herpesvirales</taxon>
        <taxon>Orthoherpesviridae</taxon>
        <taxon>Alphaherpesvirinae</taxon>
        <taxon>Simplexvirus</taxon>
        <taxon>Simplexvirus humanalpha1</taxon>
        <taxon>Human herpesvirus 1</taxon>
    </lineage>
</organism>
<evidence type="ECO:0000250" key="1"/>
<evidence type="ECO:0000256" key="2">
    <source>
        <dbReference type="SAM" id="MobiDB-lite"/>
    </source>
</evidence>
<evidence type="ECO:0000305" key="3"/>
<evidence type="ECO:0007829" key="4">
    <source>
        <dbReference type="PDB" id="2GV9"/>
    </source>
</evidence>
<gene>
    <name type="ORF">UL30</name>
</gene>
<organismHost>
    <name type="scientific">Homo sapiens</name>
    <name type="common">Human</name>
    <dbReference type="NCBI Taxonomy" id="9606"/>
</organismHost>
<proteinExistence type="evidence at protein level"/>
<accession>P04292</accession>
<protein>
    <recommendedName>
        <fullName>DNA polymerase catalytic subunit</fullName>
        <ecNumber>2.7.7.7</ecNumber>
        <ecNumber>3.1.26.4</ecNumber>
    </recommendedName>
</protein>
<comment type="function">
    <text evidence="1">Replicates viral genomic DNA. The replication complex is composed of six viral proteins: the DNA polymerase, processivity factor, primase, primase-associated factor, helicase, and ssDNA-binding protein. Additionally, the polymerase contains an intrinsic ribonuclease H (RNase H) activity that specifically degrades RNA/DNA heteroduplexes or duplex DNA substrates in the 5' to 3' direction. Therefore, it can catalyze the excision of the RNA primers that initiate the synthesis of Okazaki fragments at a replication fork during viral DNA replication (By similarity).</text>
</comment>
<comment type="catalytic activity">
    <reaction>
        <text>DNA(n) + a 2'-deoxyribonucleoside 5'-triphosphate = DNA(n+1) + diphosphate</text>
        <dbReference type="Rhea" id="RHEA:22508"/>
        <dbReference type="Rhea" id="RHEA-COMP:17339"/>
        <dbReference type="Rhea" id="RHEA-COMP:17340"/>
        <dbReference type="ChEBI" id="CHEBI:33019"/>
        <dbReference type="ChEBI" id="CHEBI:61560"/>
        <dbReference type="ChEBI" id="CHEBI:173112"/>
        <dbReference type="EC" id="2.7.7.7"/>
    </reaction>
</comment>
<comment type="catalytic activity">
    <reaction>
        <text>Endonucleolytic cleavage to 5'-phosphomonoester.</text>
        <dbReference type="EC" id="3.1.26.4"/>
    </reaction>
</comment>
<comment type="subunit">
    <text evidence="1">Forms a complex with the ssDNA-binding protein UL29, the DNA polymerase processivity factor, and the alkaline exonuclease. Interacts with the putative helicase-primase complex subunit UL8; this interaction may coordinate leading and lagging strand DNA synthesis at the replication fork (By similarity).</text>
</comment>
<comment type="subcellular location">
    <subcellularLocation>
        <location evidence="3">Host nucleus</location>
    </subcellularLocation>
    <text evidence="1">The protein is present at discrete sites in nuclei, called replication compartments where viral DNA replication occurs.</text>
</comment>
<comment type="similarity">
    <text evidence="3">Belongs to the DNA polymerase type-B family.</text>
</comment>
<reference key="1">
    <citation type="journal article" date="1985" name="Proc. Natl. Acad. Sci. U.S.A.">
        <title>Sequence and mapping analyses of the herpes simplex virus DNA polymerase gene predict a C-terminal substrate binding domain.</title>
        <authorList>
            <person name="Gibbs J.S."/>
            <person name="Chiou H.C."/>
            <person name="Hall J.D."/>
            <person name="Mount D.W."/>
            <person name="Retondo M.J."/>
            <person name="Weller S.K."/>
            <person name="Coen D.M."/>
        </authorList>
    </citation>
    <scope>NUCLEOTIDE SEQUENCE [GENOMIC DNA]</scope>
</reference>
<reference key="2">
    <citation type="journal article" date="2007" name="PLoS Pathog.">
        <title>A point mutation in a herpesvirus polymerase determines neuropathogenicity.</title>
        <authorList>
            <person name="Goodman L.B."/>
            <person name="Loregian A."/>
            <person name="Perkins G.A."/>
            <person name="Nugent J."/>
            <person name="Buckles E.L."/>
            <person name="Mercorelli B."/>
            <person name="Kydd J.H."/>
            <person name="Palu G."/>
            <person name="Smith K.C."/>
            <person name="Osterrieder N."/>
            <person name="Davis-Poynter N."/>
        </authorList>
    </citation>
    <scope>X-RAY CRYSTALLOGRAPHY (2.68 ANGSTROMS) OF 43-1235</scope>
</reference>
<dbReference type="EC" id="2.7.7.7"/>
<dbReference type="EC" id="3.1.26.4"/>
<dbReference type="EMBL" id="M10792">
    <property type="protein sequence ID" value="AAA66438.1"/>
    <property type="molecule type" value="Genomic_DNA"/>
</dbReference>
<dbReference type="PIR" id="A00714">
    <property type="entry name" value="DJBEK1"/>
</dbReference>
<dbReference type="PDB" id="2GV9">
    <property type="method" value="X-ray"/>
    <property type="resolution" value="2.68 A"/>
    <property type="chains" value="A/B=43-1235"/>
</dbReference>
<dbReference type="PDBsum" id="2GV9"/>
<dbReference type="EMDB" id="EMD-19839"/>
<dbReference type="EMDB" id="EMD-19840"/>
<dbReference type="EMDB" id="EMD-28664"/>
<dbReference type="SMR" id="P04292"/>
<dbReference type="BindingDB" id="P04292"/>
<dbReference type="ChEMBL" id="CHEMBL5944"/>
<dbReference type="EvolutionaryTrace" id="P04292"/>
<dbReference type="GO" id="GO:0042025">
    <property type="term" value="C:host cell nucleus"/>
    <property type="evidence" value="ECO:0007669"/>
    <property type="project" value="UniProtKB-SubCell"/>
</dbReference>
<dbReference type="GO" id="GO:0003677">
    <property type="term" value="F:DNA binding"/>
    <property type="evidence" value="ECO:0007669"/>
    <property type="project" value="UniProtKB-KW"/>
</dbReference>
<dbReference type="GO" id="GO:0003887">
    <property type="term" value="F:DNA-directed DNA polymerase activity"/>
    <property type="evidence" value="ECO:0007669"/>
    <property type="project" value="UniProtKB-KW"/>
</dbReference>
<dbReference type="GO" id="GO:0000166">
    <property type="term" value="F:nucleotide binding"/>
    <property type="evidence" value="ECO:0007669"/>
    <property type="project" value="InterPro"/>
</dbReference>
<dbReference type="GO" id="GO:0004523">
    <property type="term" value="F:RNA-DNA hybrid ribonuclease activity"/>
    <property type="evidence" value="ECO:0007669"/>
    <property type="project" value="UniProtKB-EC"/>
</dbReference>
<dbReference type="GO" id="GO:0006261">
    <property type="term" value="P:DNA-templated DNA replication"/>
    <property type="evidence" value="ECO:0007669"/>
    <property type="project" value="TreeGrafter"/>
</dbReference>
<dbReference type="GO" id="GO:0039693">
    <property type="term" value="P:viral DNA genome replication"/>
    <property type="evidence" value="ECO:0007669"/>
    <property type="project" value="UniProtKB-KW"/>
</dbReference>
<dbReference type="FunFam" id="1.10.287.690:FF:000006">
    <property type="entry name" value="DNA polymerase"/>
    <property type="match status" value="1"/>
</dbReference>
<dbReference type="FunFam" id="3.30.342.10:FF:000013">
    <property type="entry name" value="DNA polymerase"/>
    <property type="match status" value="1"/>
</dbReference>
<dbReference type="FunFam" id="3.30.420.10:FF:000004">
    <property type="entry name" value="DNA polymerase"/>
    <property type="match status" value="1"/>
</dbReference>
<dbReference type="FunFam" id="1.10.132.60:FF:000011">
    <property type="entry name" value="DNA polymerase catalytic subunit"/>
    <property type="match status" value="1"/>
</dbReference>
<dbReference type="Gene3D" id="1.10.132.60">
    <property type="entry name" value="DNA polymerase family B, C-terminal domain"/>
    <property type="match status" value="1"/>
</dbReference>
<dbReference type="Gene3D" id="3.30.342.10">
    <property type="entry name" value="DNA Polymerase, chain B, domain 1"/>
    <property type="match status" value="1"/>
</dbReference>
<dbReference type="Gene3D" id="1.10.287.690">
    <property type="entry name" value="Helix hairpin bin"/>
    <property type="match status" value="1"/>
</dbReference>
<dbReference type="Gene3D" id="3.90.1600.10">
    <property type="entry name" value="Palm domain of DNA polymerase"/>
    <property type="match status" value="1"/>
</dbReference>
<dbReference type="Gene3D" id="3.30.420.10">
    <property type="entry name" value="Ribonuclease H-like superfamily/Ribonuclease H"/>
    <property type="match status" value="1"/>
</dbReference>
<dbReference type="InterPro" id="IPR006172">
    <property type="entry name" value="DNA-dir_DNA_pol_B"/>
</dbReference>
<dbReference type="InterPro" id="IPR017964">
    <property type="entry name" value="DNA-dir_DNA_pol_B_CS"/>
</dbReference>
<dbReference type="InterPro" id="IPR006133">
    <property type="entry name" value="DNA-dir_DNA_pol_B_exonuc"/>
</dbReference>
<dbReference type="InterPro" id="IPR006134">
    <property type="entry name" value="DNA-dir_DNA_pol_B_multi_dom"/>
</dbReference>
<dbReference type="InterPro" id="IPR043502">
    <property type="entry name" value="DNA/RNA_pol_sf"/>
</dbReference>
<dbReference type="InterPro" id="IPR042087">
    <property type="entry name" value="DNA_pol_B_thumb"/>
</dbReference>
<dbReference type="InterPro" id="IPR023211">
    <property type="entry name" value="DNA_pol_palm_dom_sf"/>
</dbReference>
<dbReference type="InterPro" id="IPR050240">
    <property type="entry name" value="DNA_pol_type-B"/>
</dbReference>
<dbReference type="InterPro" id="IPR021639">
    <property type="entry name" value="DNAPolymera_Pol_C"/>
</dbReference>
<dbReference type="InterPro" id="IPR012337">
    <property type="entry name" value="RNaseH-like_sf"/>
</dbReference>
<dbReference type="InterPro" id="IPR036397">
    <property type="entry name" value="RNaseH_sf"/>
</dbReference>
<dbReference type="PANTHER" id="PTHR10322">
    <property type="entry name" value="DNA POLYMERASE CATALYTIC SUBUNIT"/>
    <property type="match status" value="1"/>
</dbReference>
<dbReference type="PANTHER" id="PTHR10322:SF23">
    <property type="entry name" value="DNA POLYMERASE DELTA CATALYTIC SUBUNIT"/>
    <property type="match status" value="1"/>
</dbReference>
<dbReference type="Pfam" id="PF00136">
    <property type="entry name" value="DNA_pol_B"/>
    <property type="match status" value="1"/>
</dbReference>
<dbReference type="Pfam" id="PF03104">
    <property type="entry name" value="DNA_pol_B_exo1"/>
    <property type="match status" value="1"/>
</dbReference>
<dbReference type="Pfam" id="PF11590">
    <property type="entry name" value="DNAPolymera_Pol"/>
    <property type="match status" value="1"/>
</dbReference>
<dbReference type="PRINTS" id="PR00106">
    <property type="entry name" value="DNAPOLB"/>
</dbReference>
<dbReference type="SMART" id="SM00486">
    <property type="entry name" value="POLBc"/>
    <property type="match status" value="1"/>
</dbReference>
<dbReference type="SUPFAM" id="SSF56672">
    <property type="entry name" value="DNA/RNA polymerases"/>
    <property type="match status" value="1"/>
</dbReference>
<dbReference type="SUPFAM" id="SSF53098">
    <property type="entry name" value="Ribonuclease H-like"/>
    <property type="match status" value="1"/>
</dbReference>
<dbReference type="PROSITE" id="PS00116">
    <property type="entry name" value="DNA_POLYMERASE_B"/>
    <property type="match status" value="1"/>
</dbReference>
<name>DPOL_HHV1K</name>